<sequence>MPRVSAPLVLLPAWLLMVACSPHSLRIAAILDDPMECSRGERLSITLAKNRINRAPERLGKAKVEVDIFELLRDSEYETAETMCQILPKGVVAVLGPSSSPASSSIISNICGEKEVPHFKVAPEEFVRFQLQRFTTLNLHPSNTDISVAVAGILNFFNCTTACLICAKAECLLNLEKLLRQFLISKDTLSVRMLDDTRDPTPLLKEIRDDKTATIIIHANASMSHTILLKAAELGMVSAYYTYIFTNLEFSLQRMDSLVDDRVNILGFSIFNQSHAFFQEFSQSLNQSWQENCDHVPFTGPALSSALLFDAVYAVVTAVQELNRSQEIGVKPLSCGSAQIWQHGTSLMNYLRMVELEGLTGHIEFNSKGQRSNYALKILQFTRNGFQQIGQWHVAEGLSMDSRLYASNISDSLFNTTLVVTTILENPYLMLKGNHQEMEGNDRYEGFCVDMLKELAEILRFNYKIRLVGDGVYGVPEANGTWTGMVGELIARKADLAVAGLTITAEREKVIDFSKPFMTLGISILYRVHMGRRPGYFSFLDPFSPGVWLFMLLAYLAVSCVLFLVARLTPYEWYSPHPCAQGRCNLLVNQYSLGNSLWFPVGGFMQQGSTIAPRALSTRCVSGVWWAFTLIIISSYTANLAAFLTVQRMEVPIESVDDLADQTAIEYGTIHGGSSMTFFQNSRYQTYQRMWNYMYSKQPSVFVKSTEEGIARVLNSNYAFLLESTMNEYYRQRNCNLTQIGGLLDTKGYGIGMPVGSVFRDEFDLAILQLQENNRLEILKRKWWEGGKCPKEEDHRAKGLGMENIGGIFVVLICGLIVAIFMAMLEFLWTLRHSEASEVSVCQEMVTELRNIILCQDNIHPRRRRSGGLPPQPPVLEERRPRGTATLSNGKLCGAGEPDQLAQRLAQEAALVARGCTHIRVCPECRRFQGLRARPSPARSEESLEWDKTTNSSEPE</sequence>
<feature type="signal peptide" evidence="2">
    <location>
        <begin position="1"/>
        <end position="20"/>
    </location>
</feature>
<feature type="chain" id="PRO_0000042577" description="Glutamate receptor ionotropic, kainate 4">
    <location>
        <begin position="21"/>
        <end position="956"/>
    </location>
</feature>
<feature type="topological domain" description="Extracellular" evidence="2">
    <location>
        <begin position="21"/>
        <end position="545"/>
    </location>
</feature>
<feature type="transmembrane region" description="Helical" evidence="2">
    <location>
        <begin position="546"/>
        <end position="566"/>
    </location>
</feature>
<feature type="topological domain" description="Cytoplasmic" evidence="2">
    <location>
        <begin position="567"/>
        <end position="623"/>
    </location>
</feature>
<feature type="transmembrane region" description="Helical" evidence="2">
    <location>
        <begin position="624"/>
        <end position="644"/>
    </location>
</feature>
<feature type="topological domain" description="Extracellular" evidence="2">
    <location>
        <begin position="645"/>
        <end position="804"/>
    </location>
</feature>
<feature type="transmembrane region" description="Helical" evidence="2">
    <location>
        <begin position="805"/>
        <end position="825"/>
    </location>
</feature>
<feature type="topological domain" description="Cytoplasmic" evidence="2">
    <location>
        <begin position="826"/>
        <end position="956"/>
    </location>
</feature>
<feature type="region of interest" description="Disordered" evidence="3">
    <location>
        <begin position="931"/>
        <end position="956"/>
    </location>
</feature>
<feature type="compositionally biased region" description="Basic and acidic residues" evidence="3">
    <location>
        <begin position="939"/>
        <end position="948"/>
    </location>
</feature>
<feature type="binding site" evidence="1">
    <location>
        <position position="500"/>
    </location>
    <ligand>
        <name>L-glutamate</name>
        <dbReference type="ChEBI" id="CHEBI:29985"/>
    </ligand>
</feature>
<feature type="binding site" evidence="1">
    <location>
        <position position="502"/>
    </location>
    <ligand>
        <name>L-glutamate</name>
        <dbReference type="ChEBI" id="CHEBI:29985"/>
    </ligand>
</feature>
<feature type="binding site" evidence="1">
    <location>
        <position position="507"/>
    </location>
    <ligand>
        <name>L-glutamate</name>
        <dbReference type="ChEBI" id="CHEBI:29985"/>
    </ligand>
</feature>
<feature type="binding site" evidence="1">
    <location>
        <position position="674"/>
    </location>
    <ligand>
        <name>L-glutamate</name>
        <dbReference type="ChEBI" id="CHEBI:29985"/>
    </ligand>
</feature>
<feature type="binding site" evidence="1">
    <location>
        <position position="675"/>
    </location>
    <ligand>
        <name>L-glutamate</name>
        <dbReference type="ChEBI" id="CHEBI:29985"/>
    </ligand>
</feature>
<feature type="binding site" evidence="1">
    <location>
        <position position="723"/>
    </location>
    <ligand>
        <name>L-glutamate</name>
        <dbReference type="ChEBI" id="CHEBI:29985"/>
    </ligand>
</feature>
<feature type="glycosylation site" description="N-linked (GlcNAc...) asparagine" evidence="2">
    <location>
        <position position="158"/>
    </location>
</feature>
<feature type="glycosylation site" description="N-linked (GlcNAc...) asparagine" evidence="2">
    <location>
        <position position="220"/>
    </location>
</feature>
<feature type="glycosylation site" description="N-linked (GlcNAc...) asparagine" evidence="2">
    <location>
        <position position="272"/>
    </location>
</feature>
<feature type="glycosylation site" description="N-linked (GlcNAc...) asparagine" evidence="2">
    <location>
        <position position="286"/>
    </location>
</feature>
<feature type="glycosylation site" description="N-linked (GlcNAc...) asparagine" evidence="2">
    <location>
        <position position="323"/>
    </location>
</feature>
<feature type="glycosylation site" description="N-linked (GlcNAc...) asparagine" evidence="2">
    <location>
        <position position="408"/>
    </location>
</feature>
<feature type="glycosylation site" description="N-linked (GlcNAc...) asparagine" evidence="2">
    <location>
        <position position="415"/>
    </location>
</feature>
<feature type="glycosylation site" description="N-linked (GlcNAc...) asparagine" evidence="2">
    <location>
        <position position="479"/>
    </location>
</feature>
<feature type="glycosylation site" description="N-linked (GlcNAc...) asparagine" evidence="2">
    <location>
        <position position="736"/>
    </location>
</feature>
<feature type="sequence conflict" description="In Ref. 1; BAC27660." evidence="6" ref="1">
    <original>P</original>
    <variation>Q</variation>
    <location>
        <position position="874"/>
    </location>
</feature>
<feature type="sequence conflict" description="In Ref. 1; BAC27660." evidence="6" ref="1">
    <original>P</original>
    <variation>T</variation>
    <location>
        <position position="937"/>
    </location>
</feature>
<evidence type="ECO:0000250" key="1">
    <source>
        <dbReference type="UniProtKB" id="Q01812"/>
    </source>
</evidence>
<evidence type="ECO:0000255" key="2"/>
<evidence type="ECO:0000256" key="3">
    <source>
        <dbReference type="SAM" id="MobiDB-lite"/>
    </source>
</evidence>
<evidence type="ECO:0000269" key="4">
    <source>
    </source>
</evidence>
<evidence type="ECO:0000303" key="5">
    <source>
    </source>
</evidence>
<evidence type="ECO:0000305" key="6"/>
<proteinExistence type="evidence at protein level"/>
<organism>
    <name type="scientific">Mus musculus</name>
    <name type="common">Mouse</name>
    <dbReference type="NCBI Taxonomy" id="10090"/>
    <lineage>
        <taxon>Eukaryota</taxon>
        <taxon>Metazoa</taxon>
        <taxon>Chordata</taxon>
        <taxon>Craniata</taxon>
        <taxon>Vertebrata</taxon>
        <taxon>Euteleostomi</taxon>
        <taxon>Mammalia</taxon>
        <taxon>Eutheria</taxon>
        <taxon>Euarchontoglires</taxon>
        <taxon>Glires</taxon>
        <taxon>Rodentia</taxon>
        <taxon>Myomorpha</taxon>
        <taxon>Muroidea</taxon>
        <taxon>Muridae</taxon>
        <taxon>Murinae</taxon>
        <taxon>Mus</taxon>
        <taxon>Mus</taxon>
    </lineage>
</organism>
<gene>
    <name type="primary">Grik4</name>
</gene>
<dbReference type="EMBL" id="AK032029">
    <property type="protein sequence ID" value="BAC27660.1"/>
    <property type="molecule type" value="mRNA"/>
</dbReference>
<dbReference type="EMBL" id="AC122449">
    <property type="status" value="NOT_ANNOTATED_CDS"/>
    <property type="molecule type" value="Genomic_DNA"/>
</dbReference>
<dbReference type="EMBL" id="AC136903">
    <property type="status" value="NOT_ANNOTATED_CDS"/>
    <property type="molecule type" value="Genomic_DNA"/>
</dbReference>
<dbReference type="EMBL" id="AC140387">
    <property type="status" value="NOT_ANNOTATED_CDS"/>
    <property type="molecule type" value="Genomic_DNA"/>
</dbReference>
<dbReference type="EMBL" id="AC160123">
    <property type="status" value="NOT_ANNOTATED_CDS"/>
    <property type="molecule type" value="Genomic_DNA"/>
</dbReference>
<dbReference type="CCDS" id="CCDS23089.1"/>
<dbReference type="RefSeq" id="NP_780690.2">
    <property type="nucleotide sequence ID" value="NM_175481.6"/>
</dbReference>
<dbReference type="RefSeq" id="XP_006510004.1">
    <property type="nucleotide sequence ID" value="XM_006509941.4"/>
</dbReference>
<dbReference type="RefSeq" id="XP_011240685.1">
    <property type="nucleotide sequence ID" value="XM_011242383.4"/>
</dbReference>
<dbReference type="RefSeq" id="XP_030099871.1">
    <property type="nucleotide sequence ID" value="XM_030244011.2"/>
</dbReference>
<dbReference type="RefSeq" id="XP_030099872.1">
    <property type="nucleotide sequence ID" value="XM_030244012.2"/>
</dbReference>
<dbReference type="SMR" id="Q8BMF5"/>
<dbReference type="BioGRID" id="225773">
    <property type="interactions" value="2"/>
</dbReference>
<dbReference type="FunCoup" id="Q8BMF5">
    <property type="interactions" value="484"/>
</dbReference>
<dbReference type="STRING" id="10090.ENSMUSP00000110515"/>
<dbReference type="GlyCosmos" id="Q8BMF5">
    <property type="glycosylation" value="9 sites, No reported glycans"/>
</dbReference>
<dbReference type="GlyGen" id="Q8BMF5">
    <property type="glycosylation" value="9 sites, 2 N-linked glycans (2 sites)"/>
</dbReference>
<dbReference type="PhosphoSitePlus" id="Q8BMF5"/>
<dbReference type="SwissPalm" id="Q8BMF5"/>
<dbReference type="PaxDb" id="10090-ENSMUSP00000110515"/>
<dbReference type="ProteomicsDB" id="269631"/>
<dbReference type="Antibodypedia" id="32769">
    <property type="antibodies" value="160 antibodies from 29 providers"/>
</dbReference>
<dbReference type="DNASU" id="110637"/>
<dbReference type="Ensembl" id="ENSMUST00000034515.7">
    <property type="protein sequence ID" value="ENSMUSP00000034515.7"/>
    <property type="gene ID" value="ENSMUSG00000032017.15"/>
</dbReference>
<dbReference type="Ensembl" id="ENSMUST00000114865.8">
    <property type="protein sequence ID" value="ENSMUSP00000110515.2"/>
    <property type="gene ID" value="ENSMUSG00000032017.15"/>
</dbReference>
<dbReference type="GeneID" id="110637"/>
<dbReference type="KEGG" id="mmu:110637"/>
<dbReference type="UCSC" id="uc009paz.2">
    <property type="organism name" value="mouse"/>
</dbReference>
<dbReference type="AGR" id="MGI:95817"/>
<dbReference type="CTD" id="2900"/>
<dbReference type="MGI" id="MGI:95817">
    <property type="gene designation" value="Grik4"/>
</dbReference>
<dbReference type="VEuPathDB" id="HostDB:ENSMUSG00000032017"/>
<dbReference type="eggNOG" id="KOG1052">
    <property type="taxonomic scope" value="Eukaryota"/>
</dbReference>
<dbReference type="GeneTree" id="ENSGT00940000159111"/>
<dbReference type="HOGENOM" id="CLU_007257_1_0_1"/>
<dbReference type="InParanoid" id="Q8BMF5"/>
<dbReference type="OMA" id="LVWLMKI"/>
<dbReference type="OrthoDB" id="5984008at2759"/>
<dbReference type="PhylomeDB" id="Q8BMF5"/>
<dbReference type="TreeFam" id="TF334668"/>
<dbReference type="Reactome" id="R-MMU-451308">
    <property type="pathway name" value="Activation of Ca-permeable Kainate Receptor"/>
</dbReference>
<dbReference type="BioGRID-ORCS" id="110637">
    <property type="hits" value="5 hits in 78 CRISPR screens"/>
</dbReference>
<dbReference type="ChiTaRS" id="Grik4">
    <property type="organism name" value="mouse"/>
</dbReference>
<dbReference type="PRO" id="PR:Q8BMF5"/>
<dbReference type="Proteomes" id="UP000000589">
    <property type="component" value="Chromosome 9"/>
</dbReference>
<dbReference type="RNAct" id="Q8BMF5">
    <property type="molecule type" value="protein"/>
</dbReference>
<dbReference type="Bgee" id="ENSMUSG00000032017">
    <property type="expression patterns" value="Expressed in dentate gyrus of hippocampal formation granule cell and 38 other cell types or tissues"/>
</dbReference>
<dbReference type="GO" id="GO:0042995">
    <property type="term" value="C:cell projection"/>
    <property type="evidence" value="ECO:0007669"/>
    <property type="project" value="UniProtKB-KW"/>
</dbReference>
<dbReference type="GO" id="GO:0098686">
    <property type="term" value="C:hippocampal mossy fiber to CA3 synapse"/>
    <property type="evidence" value="ECO:0000314"/>
    <property type="project" value="SynGO"/>
</dbReference>
<dbReference type="GO" id="GO:0032983">
    <property type="term" value="C:kainate selective glutamate receptor complex"/>
    <property type="evidence" value="ECO:0000353"/>
    <property type="project" value="MGI"/>
</dbReference>
<dbReference type="GO" id="GO:0016020">
    <property type="term" value="C:membrane"/>
    <property type="evidence" value="ECO:0000314"/>
    <property type="project" value="MGI"/>
</dbReference>
<dbReference type="GO" id="GO:0045211">
    <property type="term" value="C:postsynaptic membrane"/>
    <property type="evidence" value="ECO:0000314"/>
    <property type="project" value="MGI"/>
</dbReference>
<dbReference type="GO" id="GO:0042734">
    <property type="term" value="C:presynaptic membrane"/>
    <property type="evidence" value="ECO:0000314"/>
    <property type="project" value="MGI"/>
</dbReference>
<dbReference type="GO" id="GO:0045202">
    <property type="term" value="C:synapse"/>
    <property type="evidence" value="ECO:0000314"/>
    <property type="project" value="MGI"/>
</dbReference>
<dbReference type="GO" id="GO:0099507">
    <property type="term" value="F:ligand-gated monoatomic ion channel activity involved in regulation of presynaptic membrane potential"/>
    <property type="evidence" value="ECO:0007669"/>
    <property type="project" value="Ensembl"/>
</dbReference>
<dbReference type="GO" id="GO:0038023">
    <property type="term" value="F:signaling receptor activity"/>
    <property type="evidence" value="ECO:0007669"/>
    <property type="project" value="InterPro"/>
</dbReference>
<dbReference type="CDD" id="cd13724">
    <property type="entry name" value="PBP2_iGluR_kainate_KA1"/>
    <property type="match status" value="1"/>
</dbReference>
<dbReference type="FunFam" id="3.40.190.10:FF:000060">
    <property type="entry name" value="Glutamate receptor ionotropic, kainate 1"/>
    <property type="match status" value="1"/>
</dbReference>
<dbReference type="FunFam" id="3.40.190.10:FF:000072">
    <property type="entry name" value="glutamate receptor ionotropic, kainate 4"/>
    <property type="match status" value="1"/>
</dbReference>
<dbReference type="FunFam" id="3.40.50.2300:FF:000059">
    <property type="entry name" value="Glutamate receptor, ionotropic, kainate 4"/>
    <property type="match status" value="1"/>
</dbReference>
<dbReference type="FunFam" id="1.10.287.70:FF:000010">
    <property type="entry name" value="Putative glutamate receptor ionotropic kainate 1"/>
    <property type="match status" value="1"/>
</dbReference>
<dbReference type="Gene3D" id="3.40.50.2300">
    <property type="match status" value="2"/>
</dbReference>
<dbReference type="Gene3D" id="3.40.190.10">
    <property type="entry name" value="Periplasmic binding protein-like II"/>
    <property type="match status" value="3"/>
</dbReference>
<dbReference type="InterPro" id="IPR001828">
    <property type="entry name" value="ANF_lig-bd_rcpt"/>
</dbReference>
<dbReference type="InterPro" id="IPR019594">
    <property type="entry name" value="Glu/Gly-bd"/>
</dbReference>
<dbReference type="InterPro" id="IPR001508">
    <property type="entry name" value="Iono_Glu_rcpt_met"/>
</dbReference>
<dbReference type="InterPro" id="IPR015683">
    <property type="entry name" value="Ionotropic_Glu_rcpt"/>
</dbReference>
<dbReference type="InterPro" id="IPR001320">
    <property type="entry name" value="Iontro_rcpt_C"/>
</dbReference>
<dbReference type="InterPro" id="IPR028082">
    <property type="entry name" value="Peripla_BP_I"/>
</dbReference>
<dbReference type="PANTHER" id="PTHR18966">
    <property type="entry name" value="IONOTROPIC GLUTAMATE RECEPTOR"/>
    <property type="match status" value="1"/>
</dbReference>
<dbReference type="Pfam" id="PF01094">
    <property type="entry name" value="ANF_receptor"/>
    <property type="match status" value="1"/>
</dbReference>
<dbReference type="Pfam" id="PF00060">
    <property type="entry name" value="Lig_chan"/>
    <property type="match status" value="1"/>
</dbReference>
<dbReference type="Pfam" id="PF10613">
    <property type="entry name" value="Lig_chan-Glu_bd"/>
    <property type="match status" value="1"/>
</dbReference>
<dbReference type="PRINTS" id="PR00177">
    <property type="entry name" value="NMDARECEPTOR"/>
</dbReference>
<dbReference type="SMART" id="SM00918">
    <property type="entry name" value="Lig_chan-Glu_bd"/>
    <property type="match status" value="1"/>
</dbReference>
<dbReference type="SMART" id="SM00079">
    <property type="entry name" value="PBPe"/>
    <property type="match status" value="1"/>
</dbReference>
<dbReference type="SUPFAM" id="SSF53822">
    <property type="entry name" value="Periplasmic binding protein-like I"/>
    <property type="match status" value="1"/>
</dbReference>
<dbReference type="SUPFAM" id="SSF53850">
    <property type="entry name" value="Periplasmic binding protein-like II"/>
    <property type="match status" value="1"/>
</dbReference>
<keyword id="KW-1003">Cell membrane</keyword>
<keyword id="KW-0966">Cell projection</keyword>
<keyword id="KW-0325">Glycoprotein</keyword>
<keyword id="KW-0407">Ion channel</keyword>
<keyword id="KW-0406">Ion transport</keyword>
<keyword id="KW-1071">Ligand-gated ion channel</keyword>
<keyword id="KW-0472">Membrane</keyword>
<keyword id="KW-0628">Postsynaptic cell membrane</keyword>
<keyword id="KW-0675">Receptor</keyword>
<keyword id="KW-1185">Reference proteome</keyword>
<keyword id="KW-0732">Signal</keyword>
<keyword id="KW-0770">Synapse</keyword>
<keyword id="KW-0812">Transmembrane</keyword>
<keyword id="KW-1133">Transmembrane helix</keyword>
<keyword id="KW-0813">Transport</keyword>
<comment type="function">
    <text evidence="1">Ionotropic glutamate receptor that functions as a cation-permeable ligand-gated ion channel. Cannot form functional channels on its own and produces channel activity only in heteromeric assembly with GRIK1, GRIK2 and GRIK3 subunits.</text>
</comment>
<comment type="subunit">
    <text evidence="1 4">Homodimer. Can form functional heteromeric receptors with GRIK1, GRIK2 and GRIK3 subunits (By similarity). Forms a heteromeric complex with GRIK2 (PubMed:12954862).</text>
</comment>
<comment type="subcellular location">
    <subcellularLocation>
        <location evidence="4">Cell membrane</location>
        <topology evidence="2">Multi-pass membrane protein</topology>
    </subcellularLocation>
    <subcellularLocation>
        <location evidence="4">Postsynaptic cell membrane</location>
        <topology evidence="2">Multi-pass membrane protein</topology>
    </subcellularLocation>
    <subcellularLocation>
        <location evidence="4">Presynaptic cell membrane</location>
        <topology evidence="2">Multi-pass membrane protein</topology>
    </subcellularLocation>
</comment>
<comment type="tissue specificity">
    <text evidence="4">Expressed in the hippocampus and cerebellum (at protein level).</text>
</comment>
<comment type="similarity">
    <text evidence="6">Belongs to the glutamate-gated ion channel (TC 1.A.10.1) family. GRIK4 subfamily.</text>
</comment>
<protein>
    <recommendedName>
        <fullName>Glutamate receptor ionotropic, kainate 4</fullName>
        <shortName>GluK4</shortName>
    </recommendedName>
    <alternativeName>
        <fullName evidence="5">Glutamate receptor KA-1</fullName>
        <shortName>KA1</shortName>
    </alternativeName>
</protein>
<reference key="1">
    <citation type="journal article" date="2005" name="Science">
        <title>The transcriptional landscape of the mammalian genome.</title>
        <authorList>
            <person name="Carninci P."/>
            <person name="Kasukawa T."/>
            <person name="Katayama S."/>
            <person name="Gough J."/>
            <person name="Frith M.C."/>
            <person name="Maeda N."/>
            <person name="Oyama R."/>
            <person name="Ravasi T."/>
            <person name="Lenhard B."/>
            <person name="Wells C."/>
            <person name="Kodzius R."/>
            <person name="Shimokawa K."/>
            <person name="Bajic V.B."/>
            <person name="Brenner S.E."/>
            <person name="Batalov S."/>
            <person name="Forrest A.R."/>
            <person name="Zavolan M."/>
            <person name="Davis M.J."/>
            <person name="Wilming L.G."/>
            <person name="Aidinis V."/>
            <person name="Allen J.E."/>
            <person name="Ambesi-Impiombato A."/>
            <person name="Apweiler R."/>
            <person name="Aturaliya R.N."/>
            <person name="Bailey T.L."/>
            <person name="Bansal M."/>
            <person name="Baxter L."/>
            <person name="Beisel K.W."/>
            <person name="Bersano T."/>
            <person name="Bono H."/>
            <person name="Chalk A.M."/>
            <person name="Chiu K.P."/>
            <person name="Choudhary V."/>
            <person name="Christoffels A."/>
            <person name="Clutterbuck D.R."/>
            <person name="Crowe M.L."/>
            <person name="Dalla E."/>
            <person name="Dalrymple B.P."/>
            <person name="de Bono B."/>
            <person name="Della Gatta G."/>
            <person name="di Bernardo D."/>
            <person name="Down T."/>
            <person name="Engstrom P."/>
            <person name="Fagiolini M."/>
            <person name="Faulkner G."/>
            <person name="Fletcher C.F."/>
            <person name="Fukushima T."/>
            <person name="Furuno M."/>
            <person name="Futaki S."/>
            <person name="Gariboldi M."/>
            <person name="Georgii-Hemming P."/>
            <person name="Gingeras T.R."/>
            <person name="Gojobori T."/>
            <person name="Green R.E."/>
            <person name="Gustincich S."/>
            <person name="Harbers M."/>
            <person name="Hayashi Y."/>
            <person name="Hensch T.K."/>
            <person name="Hirokawa N."/>
            <person name="Hill D."/>
            <person name="Huminiecki L."/>
            <person name="Iacono M."/>
            <person name="Ikeo K."/>
            <person name="Iwama A."/>
            <person name="Ishikawa T."/>
            <person name="Jakt M."/>
            <person name="Kanapin A."/>
            <person name="Katoh M."/>
            <person name="Kawasawa Y."/>
            <person name="Kelso J."/>
            <person name="Kitamura H."/>
            <person name="Kitano H."/>
            <person name="Kollias G."/>
            <person name="Krishnan S.P."/>
            <person name="Kruger A."/>
            <person name="Kummerfeld S.K."/>
            <person name="Kurochkin I.V."/>
            <person name="Lareau L.F."/>
            <person name="Lazarevic D."/>
            <person name="Lipovich L."/>
            <person name="Liu J."/>
            <person name="Liuni S."/>
            <person name="McWilliam S."/>
            <person name="Madan Babu M."/>
            <person name="Madera M."/>
            <person name="Marchionni L."/>
            <person name="Matsuda H."/>
            <person name="Matsuzawa S."/>
            <person name="Miki H."/>
            <person name="Mignone F."/>
            <person name="Miyake S."/>
            <person name="Morris K."/>
            <person name="Mottagui-Tabar S."/>
            <person name="Mulder N."/>
            <person name="Nakano N."/>
            <person name="Nakauchi H."/>
            <person name="Ng P."/>
            <person name="Nilsson R."/>
            <person name="Nishiguchi S."/>
            <person name="Nishikawa S."/>
            <person name="Nori F."/>
            <person name="Ohara O."/>
            <person name="Okazaki Y."/>
            <person name="Orlando V."/>
            <person name="Pang K.C."/>
            <person name="Pavan W.J."/>
            <person name="Pavesi G."/>
            <person name="Pesole G."/>
            <person name="Petrovsky N."/>
            <person name="Piazza S."/>
            <person name="Reed J."/>
            <person name="Reid J.F."/>
            <person name="Ring B.Z."/>
            <person name="Ringwald M."/>
            <person name="Rost B."/>
            <person name="Ruan Y."/>
            <person name="Salzberg S.L."/>
            <person name="Sandelin A."/>
            <person name="Schneider C."/>
            <person name="Schoenbach C."/>
            <person name="Sekiguchi K."/>
            <person name="Semple C.A."/>
            <person name="Seno S."/>
            <person name="Sessa L."/>
            <person name="Sheng Y."/>
            <person name="Shibata Y."/>
            <person name="Shimada H."/>
            <person name="Shimada K."/>
            <person name="Silva D."/>
            <person name="Sinclair B."/>
            <person name="Sperling S."/>
            <person name="Stupka E."/>
            <person name="Sugiura K."/>
            <person name="Sultana R."/>
            <person name="Takenaka Y."/>
            <person name="Taki K."/>
            <person name="Tammoja K."/>
            <person name="Tan S.L."/>
            <person name="Tang S."/>
            <person name="Taylor M.S."/>
            <person name="Tegner J."/>
            <person name="Teichmann S.A."/>
            <person name="Ueda H.R."/>
            <person name="van Nimwegen E."/>
            <person name="Verardo R."/>
            <person name="Wei C.L."/>
            <person name="Yagi K."/>
            <person name="Yamanishi H."/>
            <person name="Zabarovsky E."/>
            <person name="Zhu S."/>
            <person name="Zimmer A."/>
            <person name="Hide W."/>
            <person name="Bult C."/>
            <person name="Grimmond S.M."/>
            <person name="Teasdale R.D."/>
            <person name="Liu E.T."/>
            <person name="Brusic V."/>
            <person name="Quackenbush J."/>
            <person name="Wahlestedt C."/>
            <person name="Mattick J.S."/>
            <person name="Hume D.A."/>
            <person name="Kai C."/>
            <person name="Sasaki D."/>
            <person name="Tomaru Y."/>
            <person name="Fukuda S."/>
            <person name="Kanamori-Katayama M."/>
            <person name="Suzuki M."/>
            <person name="Aoki J."/>
            <person name="Arakawa T."/>
            <person name="Iida J."/>
            <person name="Imamura K."/>
            <person name="Itoh M."/>
            <person name="Kato T."/>
            <person name="Kawaji H."/>
            <person name="Kawagashira N."/>
            <person name="Kawashima T."/>
            <person name="Kojima M."/>
            <person name="Kondo S."/>
            <person name="Konno H."/>
            <person name="Nakano K."/>
            <person name="Ninomiya N."/>
            <person name="Nishio T."/>
            <person name="Okada M."/>
            <person name="Plessy C."/>
            <person name="Shibata K."/>
            <person name="Shiraki T."/>
            <person name="Suzuki S."/>
            <person name="Tagami M."/>
            <person name="Waki K."/>
            <person name="Watahiki A."/>
            <person name="Okamura-Oho Y."/>
            <person name="Suzuki H."/>
            <person name="Kawai J."/>
            <person name="Hayashizaki Y."/>
        </authorList>
    </citation>
    <scope>NUCLEOTIDE SEQUENCE [LARGE SCALE MRNA]</scope>
    <source>
        <strain>C57BL/6J</strain>
        <tissue>Medulla oblongata</tissue>
    </source>
</reference>
<reference key="2">
    <citation type="journal article" date="2009" name="PLoS Biol.">
        <title>Lineage-specific biology revealed by a finished genome assembly of the mouse.</title>
        <authorList>
            <person name="Church D.M."/>
            <person name="Goodstadt L."/>
            <person name="Hillier L.W."/>
            <person name="Zody M.C."/>
            <person name="Goldstein S."/>
            <person name="She X."/>
            <person name="Bult C.J."/>
            <person name="Agarwala R."/>
            <person name="Cherry J.L."/>
            <person name="DiCuccio M."/>
            <person name="Hlavina W."/>
            <person name="Kapustin Y."/>
            <person name="Meric P."/>
            <person name="Maglott D."/>
            <person name="Birtle Z."/>
            <person name="Marques A.C."/>
            <person name="Graves T."/>
            <person name="Zhou S."/>
            <person name="Teague B."/>
            <person name="Potamousis K."/>
            <person name="Churas C."/>
            <person name="Place M."/>
            <person name="Herschleb J."/>
            <person name="Runnheim R."/>
            <person name="Forrest D."/>
            <person name="Amos-Landgraf J."/>
            <person name="Schwartz D.C."/>
            <person name="Cheng Z."/>
            <person name="Lindblad-Toh K."/>
            <person name="Eichler E.E."/>
            <person name="Ponting C.P."/>
        </authorList>
    </citation>
    <scope>NUCLEOTIDE SEQUENCE [LARGE SCALE GENOMIC DNA]</scope>
    <source>
        <strain>C57BL/6J</strain>
    </source>
</reference>
<reference key="3">
    <citation type="journal article" date="2003" name="J. Neurosci.">
        <title>Distribution of kainate receptor subunits at hippocampal mossy fiber synapses.</title>
        <authorList>
            <person name="Darstein M."/>
            <person name="Petralia R.S."/>
            <person name="Swanson G.T."/>
            <person name="Wenthold R.J."/>
            <person name="Heinemann S.F."/>
        </authorList>
    </citation>
    <scope>SUBUNIT</scope>
    <scope>SUBCELLULAR LOCATION</scope>
    <scope>TISSUE SPECIFICITY</scope>
</reference>
<name>GRIK4_MOUSE</name>
<accession>Q8BMF5</accession>
<accession>E9QNA2</accession>